<protein>
    <recommendedName>
        <fullName evidence="1">Cytidylate kinase</fullName>
        <shortName evidence="1">CK</shortName>
        <ecNumber evidence="1">2.7.4.25</ecNumber>
    </recommendedName>
    <alternativeName>
        <fullName evidence="1">Cytidine monophosphate kinase</fullName>
        <shortName evidence="1">CMP kinase</shortName>
    </alternativeName>
</protein>
<name>KCY_THEAB</name>
<sequence length="222" mass="25127">MPCRIAIDGPAGSGKTTVAKILADKLGIYYLDTGAMYRIIGLYLDKKGVENDSDIERELSTIKLEFINGDFYINGKRVGDEIRTPYAGICASKYAKKAIVREFLTRIQQKISKNENIVVEGRDIGTVVIPDAEVKIFLVASAEERAKRRYKELLDKGVKVSYEEVLNEIILRDKQDTEREIAPLRQPDDAVLIDSTKYTIEEVINKILEVVLEKCKLKLQKE</sequence>
<keyword id="KW-0067">ATP-binding</keyword>
<keyword id="KW-0963">Cytoplasm</keyword>
<keyword id="KW-0418">Kinase</keyword>
<keyword id="KW-0547">Nucleotide-binding</keyword>
<keyword id="KW-1185">Reference proteome</keyword>
<keyword id="KW-0808">Transferase</keyword>
<comment type="catalytic activity">
    <reaction evidence="1">
        <text>CMP + ATP = CDP + ADP</text>
        <dbReference type="Rhea" id="RHEA:11600"/>
        <dbReference type="ChEBI" id="CHEBI:30616"/>
        <dbReference type="ChEBI" id="CHEBI:58069"/>
        <dbReference type="ChEBI" id="CHEBI:60377"/>
        <dbReference type="ChEBI" id="CHEBI:456216"/>
        <dbReference type="EC" id="2.7.4.25"/>
    </reaction>
</comment>
<comment type="catalytic activity">
    <reaction evidence="1">
        <text>dCMP + ATP = dCDP + ADP</text>
        <dbReference type="Rhea" id="RHEA:25094"/>
        <dbReference type="ChEBI" id="CHEBI:30616"/>
        <dbReference type="ChEBI" id="CHEBI:57566"/>
        <dbReference type="ChEBI" id="CHEBI:58593"/>
        <dbReference type="ChEBI" id="CHEBI:456216"/>
        <dbReference type="EC" id="2.7.4.25"/>
    </reaction>
</comment>
<comment type="subcellular location">
    <subcellularLocation>
        <location evidence="1">Cytoplasm</location>
    </subcellularLocation>
</comment>
<comment type="similarity">
    <text evidence="1">Belongs to the cytidylate kinase family. Type 1 subfamily.</text>
</comment>
<accession>B7IE32</accession>
<gene>
    <name evidence="1" type="primary">cmk</name>
    <name type="ordered locus">THA_1828</name>
</gene>
<proteinExistence type="inferred from homology"/>
<reference key="1">
    <citation type="journal article" date="2009" name="J. Bacteriol.">
        <title>The genome of Thermosipho africanus TCF52B: lateral genetic connections to the Firmicutes and Archaea.</title>
        <authorList>
            <person name="Nesboe C.L."/>
            <person name="Bapteste E."/>
            <person name="Curtis B."/>
            <person name="Dahle H."/>
            <person name="Lopez P."/>
            <person name="Macleod D."/>
            <person name="Dlutek M."/>
            <person name="Bowman S."/>
            <person name="Zhaxybayeva O."/>
            <person name="Birkeland N.-K."/>
            <person name="Doolittle W.F."/>
        </authorList>
    </citation>
    <scope>NUCLEOTIDE SEQUENCE [LARGE SCALE GENOMIC DNA]</scope>
    <source>
        <strain>TCF52B</strain>
    </source>
</reference>
<dbReference type="EC" id="2.7.4.25" evidence="1"/>
<dbReference type="EMBL" id="CP001185">
    <property type="protein sequence ID" value="ACJ76259.1"/>
    <property type="molecule type" value="Genomic_DNA"/>
</dbReference>
<dbReference type="RefSeq" id="WP_012580449.1">
    <property type="nucleotide sequence ID" value="NC_011653.1"/>
</dbReference>
<dbReference type="SMR" id="B7IE32"/>
<dbReference type="STRING" id="484019.THA_1828"/>
<dbReference type="KEGG" id="taf:THA_1828"/>
<dbReference type="eggNOG" id="COG0283">
    <property type="taxonomic scope" value="Bacteria"/>
</dbReference>
<dbReference type="HOGENOM" id="CLU_079959_0_2_0"/>
<dbReference type="OrthoDB" id="9807434at2"/>
<dbReference type="Proteomes" id="UP000002453">
    <property type="component" value="Chromosome"/>
</dbReference>
<dbReference type="GO" id="GO:0005737">
    <property type="term" value="C:cytoplasm"/>
    <property type="evidence" value="ECO:0007669"/>
    <property type="project" value="UniProtKB-SubCell"/>
</dbReference>
<dbReference type="GO" id="GO:0005524">
    <property type="term" value="F:ATP binding"/>
    <property type="evidence" value="ECO:0007669"/>
    <property type="project" value="UniProtKB-UniRule"/>
</dbReference>
<dbReference type="GO" id="GO:0036430">
    <property type="term" value="F:CMP kinase activity"/>
    <property type="evidence" value="ECO:0007669"/>
    <property type="project" value="RHEA"/>
</dbReference>
<dbReference type="GO" id="GO:0036431">
    <property type="term" value="F:dCMP kinase activity"/>
    <property type="evidence" value="ECO:0007669"/>
    <property type="project" value="RHEA"/>
</dbReference>
<dbReference type="GO" id="GO:0006220">
    <property type="term" value="P:pyrimidine nucleotide metabolic process"/>
    <property type="evidence" value="ECO:0007669"/>
    <property type="project" value="UniProtKB-UniRule"/>
</dbReference>
<dbReference type="CDD" id="cd02020">
    <property type="entry name" value="CMPK"/>
    <property type="match status" value="1"/>
</dbReference>
<dbReference type="Gene3D" id="3.40.50.300">
    <property type="entry name" value="P-loop containing nucleotide triphosphate hydrolases"/>
    <property type="match status" value="1"/>
</dbReference>
<dbReference type="HAMAP" id="MF_00238">
    <property type="entry name" value="Cytidyl_kinase_type1"/>
    <property type="match status" value="1"/>
</dbReference>
<dbReference type="InterPro" id="IPR003136">
    <property type="entry name" value="Cytidylate_kin"/>
</dbReference>
<dbReference type="InterPro" id="IPR011994">
    <property type="entry name" value="Cytidylate_kinase_dom"/>
</dbReference>
<dbReference type="InterPro" id="IPR027417">
    <property type="entry name" value="P-loop_NTPase"/>
</dbReference>
<dbReference type="NCBIfam" id="TIGR00017">
    <property type="entry name" value="cmk"/>
    <property type="match status" value="1"/>
</dbReference>
<dbReference type="Pfam" id="PF02224">
    <property type="entry name" value="Cytidylate_kin"/>
    <property type="match status" value="1"/>
</dbReference>
<dbReference type="SUPFAM" id="SSF52540">
    <property type="entry name" value="P-loop containing nucleoside triphosphate hydrolases"/>
    <property type="match status" value="1"/>
</dbReference>
<feature type="chain" id="PRO_1000119028" description="Cytidylate kinase">
    <location>
        <begin position="1"/>
        <end position="222"/>
    </location>
</feature>
<feature type="binding site" evidence="1">
    <location>
        <begin position="9"/>
        <end position="17"/>
    </location>
    <ligand>
        <name>ATP</name>
        <dbReference type="ChEBI" id="CHEBI:30616"/>
    </ligand>
</feature>
<organism>
    <name type="scientific">Thermosipho africanus (strain TCF52B)</name>
    <dbReference type="NCBI Taxonomy" id="484019"/>
    <lineage>
        <taxon>Bacteria</taxon>
        <taxon>Thermotogati</taxon>
        <taxon>Thermotogota</taxon>
        <taxon>Thermotogae</taxon>
        <taxon>Thermotogales</taxon>
        <taxon>Fervidobacteriaceae</taxon>
        <taxon>Thermosipho</taxon>
    </lineage>
</organism>
<evidence type="ECO:0000255" key="1">
    <source>
        <dbReference type="HAMAP-Rule" id="MF_00238"/>
    </source>
</evidence>